<sequence>MSSLPSSRRTAGDTWAITESVGATALGVAAARAVETAATNPLIRDEFAKVLVSSAGTAWARLADADLAWLDGDQLGRRVHRVACDYQAVRTHFFDEYFGAAVDAGVRQVVILAAGLDARAYRLNWPAGTVVYEIDQPSVLEYKAGILQSHGAVPTARRHAVAVDLRDDWPAALIAAGFDGTQPTAWLAEGLLPYLPGDAADRLFDMVTALSAPGSQVAVEAFTMNTKGNTQRWNRMRERLGLDIDVQALTYHEPDRSDAAQWLATHGWQVHSVSNREEMARLGRAIPQDLVDETVRTTLLRGRLVTPAQPA</sequence>
<dbReference type="EC" id="2.1.1.-"/>
<dbReference type="EMBL" id="AE000516">
    <property type="protein sequence ID" value="AAK44377.1"/>
    <property type="status" value="ALT_INIT"/>
    <property type="molecule type" value="Genomic_DNA"/>
</dbReference>
<dbReference type="PIR" id="D70617">
    <property type="entry name" value="D70617"/>
</dbReference>
<dbReference type="SMR" id="P9WFJ0"/>
<dbReference type="KEGG" id="mtc:MT0153"/>
<dbReference type="HOGENOM" id="CLU_056160_2_1_11"/>
<dbReference type="Proteomes" id="UP000001020">
    <property type="component" value="Chromosome"/>
</dbReference>
<dbReference type="GO" id="GO:0008168">
    <property type="term" value="F:methyltransferase activity"/>
    <property type="evidence" value="ECO:0007669"/>
    <property type="project" value="UniProtKB-KW"/>
</dbReference>
<dbReference type="GO" id="GO:0032259">
    <property type="term" value="P:methylation"/>
    <property type="evidence" value="ECO:0007669"/>
    <property type="project" value="UniProtKB-KW"/>
</dbReference>
<dbReference type="Gene3D" id="3.40.50.150">
    <property type="entry name" value="Vaccinia Virus protein VP39"/>
    <property type="match status" value="1"/>
</dbReference>
<dbReference type="InterPro" id="IPR007213">
    <property type="entry name" value="Ppm1/Ppm2/Tcmp"/>
</dbReference>
<dbReference type="InterPro" id="IPR029063">
    <property type="entry name" value="SAM-dependent_MTases_sf"/>
</dbReference>
<dbReference type="InterPro" id="IPR011610">
    <property type="entry name" value="SAM_mthyl_Trfase_ML2640-like"/>
</dbReference>
<dbReference type="NCBIfam" id="TIGR00027">
    <property type="entry name" value="mthyl_TIGR00027"/>
    <property type="match status" value="1"/>
</dbReference>
<dbReference type="PANTHER" id="PTHR43619">
    <property type="entry name" value="S-ADENOSYL-L-METHIONINE-DEPENDENT METHYLTRANSFERASE YKTD-RELATED"/>
    <property type="match status" value="1"/>
</dbReference>
<dbReference type="PANTHER" id="PTHR43619:SF2">
    <property type="entry name" value="S-ADENOSYL-L-METHIONINE-DEPENDENT METHYLTRANSFERASES SUPERFAMILY PROTEIN"/>
    <property type="match status" value="1"/>
</dbReference>
<dbReference type="Pfam" id="PF04072">
    <property type="entry name" value="LCM"/>
    <property type="match status" value="1"/>
</dbReference>
<dbReference type="SUPFAM" id="SSF53335">
    <property type="entry name" value="S-adenosyl-L-methionine-dependent methyltransferases"/>
    <property type="match status" value="1"/>
</dbReference>
<organism>
    <name type="scientific">Mycobacterium tuberculosis (strain CDC 1551 / Oshkosh)</name>
    <dbReference type="NCBI Taxonomy" id="83331"/>
    <lineage>
        <taxon>Bacteria</taxon>
        <taxon>Bacillati</taxon>
        <taxon>Actinomycetota</taxon>
        <taxon>Actinomycetes</taxon>
        <taxon>Mycobacteriales</taxon>
        <taxon>Mycobacteriaceae</taxon>
        <taxon>Mycobacterium</taxon>
        <taxon>Mycobacterium tuberculosis complex</taxon>
    </lineage>
</organism>
<comment type="function">
    <text evidence="1">Exhibits S-adenosyl-L-methionine-dependent methyltransferase activity.</text>
</comment>
<comment type="similarity">
    <text evidence="2">Belongs to the UPF0677 family.</text>
</comment>
<comment type="sequence caution" evidence="2">
    <conflict type="erroneous initiation">
        <sequence resource="EMBL-CDS" id="AAK44377"/>
    </conflict>
    <text>Extended N-terminus.</text>
</comment>
<protein>
    <recommendedName>
        <fullName>Putative S-adenosyl-L-methionine-dependent methyltransferase MT0153</fullName>
        <ecNumber>2.1.1.-</ecNumber>
    </recommendedName>
</protein>
<accession>P9WFJ0</accession>
<accession>L0T2T4</accession>
<accession>P96822</accession>
<accession>Q7DAE1</accession>
<keyword id="KW-0489">Methyltransferase</keyword>
<keyword id="KW-1185">Reference proteome</keyword>
<keyword id="KW-0949">S-adenosyl-L-methionine</keyword>
<keyword id="KW-0808">Transferase</keyword>
<gene>
    <name type="ordered locus">MT0153</name>
</gene>
<evidence type="ECO:0000250" key="1"/>
<evidence type="ECO:0000305" key="2"/>
<proteinExistence type="inferred from homology"/>
<name>Y153_MYCTO</name>
<reference key="1">
    <citation type="journal article" date="2002" name="J. Bacteriol.">
        <title>Whole-genome comparison of Mycobacterium tuberculosis clinical and laboratory strains.</title>
        <authorList>
            <person name="Fleischmann R.D."/>
            <person name="Alland D."/>
            <person name="Eisen J.A."/>
            <person name="Carpenter L."/>
            <person name="White O."/>
            <person name="Peterson J.D."/>
            <person name="DeBoy R.T."/>
            <person name="Dodson R.J."/>
            <person name="Gwinn M.L."/>
            <person name="Haft D.H."/>
            <person name="Hickey E.K."/>
            <person name="Kolonay J.F."/>
            <person name="Nelson W.C."/>
            <person name="Umayam L.A."/>
            <person name="Ermolaeva M.D."/>
            <person name="Salzberg S.L."/>
            <person name="Delcher A."/>
            <person name="Utterback T.R."/>
            <person name="Weidman J.F."/>
            <person name="Khouri H.M."/>
            <person name="Gill J."/>
            <person name="Mikula A."/>
            <person name="Bishai W."/>
            <person name="Jacobs W.R. Jr."/>
            <person name="Venter J.C."/>
            <person name="Fraser C.M."/>
        </authorList>
    </citation>
    <scope>NUCLEOTIDE SEQUENCE [LARGE SCALE GENOMIC DNA]</scope>
    <source>
        <strain>CDC 1551 / Oshkosh</strain>
    </source>
</reference>
<feature type="chain" id="PRO_0000428530" description="Putative S-adenosyl-L-methionine-dependent methyltransferase MT0153">
    <location>
        <begin position="1"/>
        <end position="311"/>
    </location>
</feature>
<feature type="binding site" evidence="1">
    <location>
        <position position="135"/>
    </location>
    <ligand>
        <name>S-adenosyl-L-methionine</name>
        <dbReference type="ChEBI" id="CHEBI:59789"/>
    </ligand>
</feature>
<feature type="binding site" evidence="1">
    <location>
        <begin position="164"/>
        <end position="165"/>
    </location>
    <ligand>
        <name>S-adenosyl-L-methionine</name>
        <dbReference type="ChEBI" id="CHEBI:59789"/>
    </ligand>
</feature>